<gene>
    <name type="primary">serA</name>
    <name type="ordered locus">c3494</name>
</gene>
<evidence type="ECO:0000250" key="1"/>
<evidence type="ECO:0000250" key="2">
    <source>
        <dbReference type="UniProtKB" id="P0A9T0"/>
    </source>
</evidence>
<evidence type="ECO:0000255" key="3">
    <source>
        <dbReference type="PROSITE-ProRule" id="PRU01007"/>
    </source>
</evidence>
<evidence type="ECO:0000305" key="4"/>
<protein>
    <recommendedName>
        <fullName>D-3-phosphoglycerate dehydrogenase</fullName>
        <shortName>PGDH</shortName>
        <ecNumber evidence="2">1.1.1.95</ecNumber>
    </recommendedName>
    <alternativeName>
        <fullName evidence="2">2-oxoglutarate reductase</fullName>
        <ecNumber evidence="2">1.1.1.399</ecNumber>
    </alternativeName>
</protein>
<name>SERA_ECOL6</name>
<dbReference type="EC" id="1.1.1.95" evidence="2"/>
<dbReference type="EC" id="1.1.1.399" evidence="2"/>
<dbReference type="EMBL" id="AE014075">
    <property type="protein sequence ID" value="AAN81942.1"/>
    <property type="molecule type" value="Genomic_DNA"/>
</dbReference>
<dbReference type="RefSeq" id="WP_001151604.1">
    <property type="nucleotide sequence ID" value="NZ_CP051263.1"/>
</dbReference>
<dbReference type="SMR" id="P0A9T1"/>
<dbReference type="STRING" id="199310.c3494"/>
<dbReference type="GeneID" id="93779086"/>
<dbReference type="KEGG" id="ecc:c3494"/>
<dbReference type="eggNOG" id="COG0111">
    <property type="taxonomic scope" value="Bacteria"/>
</dbReference>
<dbReference type="HOGENOM" id="CLU_019796_9_2_6"/>
<dbReference type="BioCyc" id="ECOL199310:C3494-MONOMER"/>
<dbReference type="SABIO-RK" id="P0A9T1"/>
<dbReference type="UniPathway" id="UPA00135">
    <property type="reaction ID" value="UER00196"/>
</dbReference>
<dbReference type="Proteomes" id="UP000001410">
    <property type="component" value="Chromosome"/>
</dbReference>
<dbReference type="GO" id="GO:0005829">
    <property type="term" value="C:cytosol"/>
    <property type="evidence" value="ECO:0007669"/>
    <property type="project" value="UniProtKB-ARBA"/>
</dbReference>
<dbReference type="GO" id="GO:0051287">
    <property type="term" value="F:NAD binding"/>
    <property type="evidence" value="ECO:0007669"/>
    <property type="project" value="InterPro"/>
</dbReference>
<dbReference type="GO" id="GO:0004617">
    <property type="term" value="F:phosphoglycerate dehydrogenase activity"/>
    <property type="evidence" value="ECO:0007669"/>
    <property type="project" value="UniProtKB-EC"/>
</dbReference>
<dbReference type="GO" id="GO:0006564">
    <property type="term" value="P:L-serine biosynthetic process"/>
    <property type="evidence" value="ECO:0007669"/>
    <property type="project" value="UniProtKB-KW"/>
</dbReference>
<dbReference type="CDD" id="cd04901">
    <property type="entry name" value="ACT_3PGDH"/>
    <property type="match status" value="1"/>
</dbReference>
<dbReference type="CDD" id="cd12176">
    <property type="entry name" value="PGDH_3"/>
    <property type="match status" value="1"/>
</dbReference>
<dbReference type="FunFam" id="3.30.70.260:FF:000007">
    <property type="entry name" value="D-3-phosphoglycerate dehydrogenase"/>
    <property type="match status" value="1"/>
</dbReference>
<dbReference type="FunFam" id="3.40.50.720:FF:000041">
    <property type="entry name" value="D-3-phosphoglycerate dehydrogenase"/>
    <property type="match status" value="1"/>
</dbReference>
<dbReference type="Gene3D" id="3.30.70.260">
    <property type="match status" value="1"/>
</dbReference>
<dbReference type="Gene3D" id="3.40.50.720">
    <property type="entry name" value="NAD(P)-binding Rossmann-like Domain"/>
    <property type="match status" value="2"/>
</dbReference>
<dbReference type="InterPro" id="IPR045865">
    <property type="entry name" value="ACT-like_dom_sf"/>
</dbReference>
<dbReference type="InterPro" id="IPR002912">
    <property type="entry name" value="ACT_dom"/>
</dbReference>
<dbReference type="InterPro" id="IPR054480">
    <property type="entry name" value="AHAS_small-like_ACT"/>
</dbReference>
<dbReference type="InterPro" id="IPR050223">
    <property type="entry name" value="D-isomer_2-hydroxyacid_DH"/>
</dbReference>
<dbReference type="InterPro" id="IPR006139">
    <property type="entry name" value="D-isomer_2_OHA_DH_cat_dom"/>
</dbReference>
<dbReference type="InterPro" id="IPR029753">
    <property type="entry name" value="D-isomer_DH_CS"/>
</dbReference>
<dbReference type="InterPro" id="IPR029752">
    <property type="entry name" value="D-isomer_DH_CS1"/>
</dbReference>
<dbReference type="InterPro" id="IPR006140">
    <property type="entry name" value="D-isomer_DH_NAD-bd"/>
</dbReference>
<dbReference type="InterPro" id="IPR036291">
    <property type="entry name" value="NAD(P)-bd_dom_sf"/>
</dbReference>
<dbReference type="NCBIfam" id="NF008759">
    <property type="entry name" value="PRK11790.1"/>
    <property type="match status" value="1"/>
</dbReference>
<dbReference type="PANTHER" id="PTHR10996">
    <property type="entry name" value="2-HYDROXYACID DEHYDROGENASE-RELATED"/>
    <property type="match status" value="1"/>
</dbReference>
<dbReference type="PANTHER" id="PTHR10996:SF282">
    <property type="entry name" value="D-3-PHOSPHOGLYCERATE DEHYDROGENASE 1-RELATED"/>
    <property type="match status" value="1"/>
</dbReference>
<dbReference type="Pfam" id="PF00389">
    <property type="entry name" value="2-Hacid_dh"/>
    <property type="match status" value="1"/>
</dbReference>
<dbReference type="Pfam" id="PF02826">
    <property type="entry name" value="2-Hacid_dh_C"/>
    <property type="match status" value="1"/>
</dbReference>
<dbReference type="Pfam" id="PF22629">
    <property type="entry name" value="ACT_AHAS_ss"/>
    <property type="match status" value="1"/>
</dbReference>
<dbReference type="SUPFAM" id="SSF55021">
    <property type="entry name" value="ACT-like"/>
    <property type="match status" value="1"/>
</dbReference>
<dbReference type="SUPFAM" id="SSF52283">
    <property type="entry name" value="Formate/glycerate dehydrogenase catalytic domain-like"/>
    <property type="match status" value="1"/>
</dbReference>
<dbReference type="SUPFAM" id="SSF51735">
    <property type="entry name" value="NAD(P)-binding Rossmann-fold domains"/>
    <property type="match status" value="1"/>
</dbReference>
<dbReference type="PROSITE" id="PS51671">
    <property type="entry name" value="ACT"/>
    <property type="match status" value="1"/>
</dbReference>
<dbReference type="PROSITE" id="PS00065">
    <property type="entry name" value="D_2_HYDROXYACID_DH_1"/>
    <property type="match status" value="1"/>
</dbReference>
<dbReference type="PROSITE" id="PS00670">
    <property type="entry name" value="D_2_HYDROXYACID_DH_2"/>
    <property type="match status" value="1"/>
</dbReference>
<dbReference type="PROSITE" id="PS00671">
    <property type="entry name" value="D_2_HYDROXYACID_DH_3"/>
    <property type="match status" value="1"/>
</dbReference>
<proteinExistence type="inferred from homology"/>
<keyword id="KW-0028">Amino-acid biosynthesis</keyword>
<keyword id="KW-0520">NAD</keyword>
<keyword id="KW-0560">Oxidoreductase</keyword>
<keyword id="KW-1185">Reference proteome</keyword>
<keyword id="KW-0718">Serine biosynthesis</keyword>
<comment type="function">
    <text evidence="2">Catalyzes the reversible oxidation of 3-phospho-D-glycerate to 3-phosphonooxypyruvate, the first step of the phosphorylated L-serine biosynthesis pathway. Also catalyzes the reversible oxidation of 2-hydroxyglutarate to 2-oxoglutarate.</text>
</comment>
<comment type="catalytic activity">
    <reaction evidence="2">
        <text>(2R)-3-phosphoglycerate + NAD(+) = 3-phosphooxypyruvate + NADH + H(+)</text>
        <dbReference type="Rhea" id="RHEA:12641"/>
        <dbReference type="ChEBI" id="CHEBI:15378"/>
        <dbReference type="ChEBI" id="CHEBI:18110"/>
        <dbReference type="ChEBI" id="CHEBI:57540"/>
        <dbReference type="ChEBI" id="CHEBI:57945"/>
        <dbReference type="ChEBI" id="CHEBI:58272"/>
        <dbReference type="EC" id="1.1.1.95"/>
    </reaction>
</comment>
<comment type="catalytic activity">
    <reaction evidence="2">
        <text>(R)-2-hydroxyglutarate + NAD(+) = 2-oxoglutarate + NADH + H(+)</text>
        <dbReference type="Rhea" id="RHEA:49612"/>
        <dbReference type="ChEBI" id="CHEBI:15378"/>
        <dbReference type="ChEBI" id="CHEBI:15801"/>
        <dbReference type="ChEBI" id="CHEBI:16810"/>
        <dbReference type="ChEBI" id="CHEBI:57540"/>
        <dbReference type="ChEBI" id="CHEBI:57945"/>
        <dbReference type="EC" id="1.1.1.399"/>
    </reaction>
</comment>
<comment type="activity regulation">
    <text evidence="2">In bacteria displays feedback inhibition by L-serine.</text>
</comment>
<comment type="pathway">
    <text>Amino-acid biosynthesis; L-serine biosynthesis; L-serine from 3-phospho-D-glycerate: step 1/3.</text>
</comment>
<comment type="subunit">
    <text evidence="2">Homotetramer.</text>
</comment>
<comment type="similarity">
    <text evidence="4">Belongs to the D-isomer specific 2-hydroxyacid dehydrogenase family.</text>
</comment>
<sequence>MAKVSLEKDKIKFLLVEGVHQKALESLRAAGYTNIEFHKGALDDEQLKESIRDAHFIGLRSRTHLTEDVINAAEKLVAIGCFCIGTNQVDLDAAAKRGIPVFNAPFSNTRSVAELVIGELLLLLRGVPEANAKAHRGVWNKLAAGSFEARGKKLGIIGYGHIGTQLGILAESLGMYVYFYDIENKLPLGNATQVQHLSDLLNMSDVVSLHVPENPSTKNMMGAKEISLMKPGSLLINASRGTVVDIPALCDALASKHLAGAAIDVFPTEPATNSDPFTSPLCEFDNVLLTPHIGGSTQEAQENIGLEVAGKLIKYSDNGSTLSAVNFPEVSLPLHGGRRLMHIHENRPGVLTALNKIFAEQGVNIAAQYLQTSAQMGYVVIDIEADEDVAEKALQAMKAIPGTIRARLLY</sequence>
<feature type="initiator methionine" description="Removed" evidence="1">
    <location>
        <position position="1"/>
    </location>
</feature>
<feature type="chain" id="PRO_0000076001" description="D-3-phosphoglycerate dehydrogenase">
    <location>
        <begin position="2"/>
        <end position="410"/>
    </location>
</feature>
<feature type="domain" description="ACT" evidence="3">
    <location>
        <begin position="339"/>
        <end position="410"/>
    </location>
</feature>
<feature type="active site" evidence="1">
    <location>
        <position position="240"/>
    </location>
</feature>
<feature type="active site" evidence="1">
    <location>
        <position position="269"/>
    </location>
</feature>
<feature type="active site" description="Proton donor" evidence="1">
    <location>
        <position position="292"/>
    </location>
</feature>
<feature type="binding site" evidence="2">
    <location>
        <begin position="161"/>
        <end position="162"/>
    </location>
    <ligand>
        <name>NAD(+)</name>
        <dbReference type="ChEBI" id="CHEBI:57540"/>
    </ligand>
</feature>
<feature type="binding site" evidence="2">
    <location>
        <position position="181"/>
    </location>
    <ligand>
        <name>NAD(+)</name>
        <dbReference type="ChEBI" id="CHEBI:57540"/>
    </ligand>
</feature>
<feature type="binding site" evidence="2">
    <location>
        <begin position="238"/>
        <end position="240"/>
    </location>
    <ligand>
        <name>NAD(+)</name>
        <dbReference type="ChEBI" id="CHEBI:57540"/>
    </ligand>
</feature>
<feature type="binding site" evidence="2">
    <location>
        <position position="264"/>
    </location>
    <ligand>
        <name>NAD(+)</name>
        <dbReference type="ChEBI" id="CHEBI:57540"/>
    </ligand>
</feature>
<feature type="binding site" evidence="2">
    <location>
        <begin position="292"/>
        <end position="295"/>
    </location>
    <ligand>
        <name>NAD(+)</name>
        <dbReference type="ChEBI" id="CHEBI:57540"/>
    </ligand>
</feature>
<accession>P0A9T1</accession>
<accession>P08328</accession>
<accession>Q47633</accession>
<reference key="1">
    <citation type="journal article" date="2002" name="Proc. Natl. Acad. Sci. U.S.A.">
        <title>Extensive mosaic structure revealed by the complete genome sequence of uropathogenic Escherichia coli.</title>
        <authorList>
            <person name="Welch R.A."/>
            <person name="Burland V."/>
            <person name="Plunkett G. III"/>
            <person name="Redford P."/>
            <person name="Roesch P."/>
            <person name="Rasko D."/>
            <person name="Buckles E.L."/>
            <person name="Liou S.-R."/>
            <person name="Boutin A."/>
            <person name="Hackett J."/>
            <person name="Stroud D."/>
            <person name="Mayhew G.F."/>
            <person name="Rose D.J."/>
            <person name="Zhou S."/>
            <person name="Schwartz D.C."/>
            <person name="Perna N.T."/>
            <person name="Mobley H.L.T."/>
            <person name="Donnenberg M.S."/>
            <person name="Blattner F.R."/>
        </authorList>
    </citation>
    <scope>NUCLEOTIDE SEQUENCE [LARGE SCALE GENOMIC DNA]</scope>
    <source>
        <strain>CFT073 / ATCC 700928 / UPEC</strain>
    </source>
</reference>
<organism>
    <name type="scientific">Escherichia coli O6:H1 (strain CFT073 / ATCC 700928 / UPEC)</name>
    <dbReference type="NCBI Taxonomy" id="199310"/>
    <lineage>
        <taxon>Bacteria</taxon>
        <taxon>Pseudomonadati</taxon>
        <taxon>Pseudomonadota</taxon>
        <taxon>Gammaproteobacteria</taxon>
        <taxon>Enterobacterales</taxon>
        <taxon>Enterobacteriaceae</taxon>
        <taxon>Escherichia</taxon>
    </lineage>
</organism>